<name>HCT2_ORYSJ</name>
<organism evidence="6">
    <name type="scientific">Oryza sativa subsp. japonica</name>
    <name type="common">Rice</name>
    <dbReference type="NCBI Taxonomy" id="39947"/>
    <lineage>
        <taxon>Eukaryota</taxon>
        <taxon>Viridiplantae</taxon>
        <taxon>Streptophyta</taxon>
        <taxon>Embryophyta</taxon>
        <taxon>Tracheophyta</taxon>
        <taxon>Spermatophyta</taxon>
        <taxon>Magnoliopsida</taxon>
        <taxon>Liliopsida</taxon>
        <taxon>Poales</taxon>
        <taxon>Poaceae</taxon>
        <taxon>BOP clade</taxon>
        <taxon>Oryzoideae</taxon>
        <taxon>Oryzeae</taxon>
        <taxon>Oryzinae</taxon>
        <taxon>Oryza</taxon>
        <taxon>Oryza sativa</taxon>
    </lineage>
</organism>
<accession>Q6K638</accession>
<protein>
    <recommendedName>
        <fullName evidence="5">Hydroxycinnamoyltransferase 2</fullName>
        <shortName evidence="4">OsHCT2</shortName>
        <ecNumber evidence="5">2.3.1.-</ecNumber>
    </recommendedName>
    <alternativeName>
        <fullName evidence="5">BAHD-like hydroxycinnamoyl transferase HCT2</fullName>
    </alternativeName>
</protein>
<keyword id="KW-0012">Acyltransferase</keyword>
<keyword id="KW-1185">Reference proteome</keyword>
<keyword id="KW-0808">Transferase</keyword>
<gene>
    <name evidence="4" type="primary">HCT2</name>
    <name evidence="7" type="ordered locus">Os02g0611800</name>
    <name evidence="5" type="ordered locus">LOC_Os02g39850</name>
    <name evidence="6" type="ORF">OJ1004_A05.15</name>
</gene>
<reference key="1">
    <citation type="journal article" date="2005" name="Nature">
        <title>The map-based sequence of the rice genome.</title>
        <authorList>
            <consortium name="International rice genome sequencing project (IRGSP)"/>
        </authorList>
    </citation>
    <scope>NUCLEOTIDE SEQUENCE [LARGE SCALE GENOMIC DNA]</scope>
    <source>
        <strain>cv. Nipponbare</strain>
    </source>
</reference>
<reference key="2">
    <citation type="journal article" date="2008" name="Nucleic Acids Res.">
        <title>The rice annotation project database (RAP-DB): 2008 update.</title>
        <authorList>
            <consortium name="The rice annotation project (RAP)"/>
        </authorList>
    </citation>
    <scope>GENOME REANNOTATION</scope>
    <source>
        <strain>cv. Nipponbare</strain>
    </source>
</reference>
<reference key="3">
    <citation type="journal article" date="2013" name="Rice">
        <title>Improvement of the Oryza sativa Nipponbare reference genome using next generation sequence and optical map data.</title>
        <authorList>
            <person name="Kawahara Y."/>
            <person name="de la Bastide M."/>
            <person name="Hamilton J.P."/>
            <person name="Kanamori H."/>
            <person name="McCombie W.R."/>
            <person name="Ouyang S."/>
            <person name="Schwartz D.C."/>
            <person name="Tanaka T."/>
            <person name="Wu J."/>
            <person name="Zhou S."/>
            <person name="Childs K.L."/>
            <person name="Davidson R.M."/>
            <person name="Lin H."/>
            <person name="Quesada-Ocampo L."/>
            <person name="Vaillancourt B."/>
            <person name="Sakai H."/>
            <person name="Lee S.S."/>
            <person name="Kim J."/>
            <person name="Numa H."/>
            <person name="Itoh T."/>
            <person name="Buell C.R."/>
            <person name="Matsumoto T."/>
        </authorList>
    </citation>
    <scope>GENOME REANNOTATION</scope>
    <source>
        <strain>cv. Nipponbare</strain>
    </source>
</reference>
<reference key="4">
    <citation type="journal article" date="2003" name="Science">
        <title>Collection, mapping, and annotation of over 28,000 cDNA clones from japonica rice.</title>
        <authorList>
            <consortium name="The rice full-length cDNA consortium"/>
        </authorList>
    </citation>
    <scope>NUCLEOTIDE SEQUENCE [LARGE SCALE MRNA]</scope>
    <source>
        <strain>cv. Nipponbare</strain>
    </source>
</reference>
<reference key="5">
    <citation type="journal article" date="2012" name="Phytochemistry">
        <title>Characterization of hydroxycinnamoyltransferase from rice and its application for biological synthesis of hydroxycinnamoyl glycerols.</title>
        <authorList>
            <person name="Kim I.A."/>
            <person name="Kim B.G."/>
            <person name="Kim M."/>
            <person name="Ahn J.H."/>
        </authorList>
    </citation>
    <scope>TISSUE SPECIFICITY</scope>
</reference>
<sequence>MKINVRGSTMVRPAEETPRVRLWNSSLDLVVPRFHTPSVYFFRRGEAAAAEGGSYFDGERMRRALAEALVPFYPMAGRLAHDEDGRVEIDCNGEGVLFVEADAPGATVDDFGDFAPTMDLKRLIPTVDYTDGISSFPILVLQVTHFKCGGVALGVGMQHHVADGFSGLHFINSWADLCRGVPIAVMPFIDRTLVRARDPPAPSHPHVEYQPAPAMLAPEPPQALTAKPAPPPTAVDIFKLSRSDLGRLRSQLPRGEGAPRYSTYAVLAAHVWRCASLARGLPAEQPTKLYCATDGRQRLQPSLPDGYFGNVIFTATPLAEAGRVTGSLADGAATIQSALDRMDSGYCRSALDYLELQPDLSALVRGAHTFRCPNLGLTSWVRLPIHDADFGWGRPVFMGPGGIAYEGLAFVLPSASGDGSLSVAISLQAEHMEKFRKMIFDF</sequence>
<feature type="chain" id="PRO_0000437764" description="Hydroxycinnamoyltransferase 2">
    <location>
        <begin position="1"/>
        <end position="442"/>
    </location>
</feature>
<feature type="active site" description="Proton acceptor" evidence="2">
    <location>
        <position position="159"/>
    </location>
</feature>
<feature type="active site" description="Proton acceptor" evidence="2">
    <location>
        <position position="389"/>
    </location>
</feature>
<evidence type="ECO:0000250" key="1">
    <source>
        <dbReference type="UniProtKB" id="Q5SMM6"/>
    </source>
</evidence>
<evidence type="ECO:0000250" key="2">
    <source>
        <dbReference type="UniProtKB" id="Q8W1W9"/>
    </source>
</evidence>
<evidence type="ECO:0000269" key="3">
    <source>
    </source>
</evidence>
<evidence type="ECO:0000303" key="4">
    <source>
    </source>
</evidence>
<evidence type="ECO:0000305" key="5"/>
<evidence type="ECO:0000312" key="6">
    <source>
        <dbReference type="EMBL" id="BAD19683.1"/>
    </source>
</evidence>
<evidence type="ECO:0000312" key="7">
    <source>
        <dbReference type="EMBL" id="BAS79724.1"/>
    </source>
</evidence>
<comment type="function">
    <text evidence="1">Hydroxycinnamoyl transferase that catalyzes the transfer of an acyl from p-coumaryol-CoA to various acyl acceptors. Can use feruloyl-CoA and caffeoyl-CoA as acyl donors.</text>
</comment>
<comment type="tissue specificity">
    <text evidence="3">Expressed in roots and leaves. Expressed at low levels in stems and seeds.</text>
</comment>
<comment type="similarity">
    <text evidence="5">Belongs to the plant acyltransferase family.</text>
</comment>
<dbReference type="EC" id="2.3.1.-" evidence="5"/>
<dbReference type="EMBL" id="AP005286">
    <property type="protein sequence ID" value="BAD19683.1"/>
    <property type="molecule type" value="Genomic_DNA"/>
</dbReference>
<dbReference type="EMBL" id="AP008208">
    <property type="protein sequence ID" value="BAF09322.1"/>
    <property type="molecule type" value="Genomic_DNA"/>
</dbReference>
<dbReference type="EMBL" id="AP014958">
    <property type="protein sequence ID" value="BAS79724.1"/>
    <property type="molecule type" value="Genomic_DNA"/>
</dbReference>
<dbReference type="EMBL" id="AK104319">
    <property type="protein sequence ID" value="BAG96596.1"/>
    <property type="molecule type" value="mRNA"/>
</dbReference>
<dbReference type="RefSeq" id="XP_015626217.1">
    <property type="nucleotide sequence ID" value="XM_015770731.1"/>
</dbReference>
<dbReference type="SMR" id="Q6K638"/>
<dbReference type="FunCoup" id="Q6K638">
    <property type="interactions" value="212"/>
</dbReference>
<dbReference type="STRING" id="39947.Q6K638"/>
<dbReference type="PaxDb" id="39947-Q6K638"/>
<dbReference type="EnsemblPlants" id="Os02t0611800-01">
    <property type="protein sequence ID" value="Os02t0611800-01"/>
    <property type="gene ID" value="Os02g0611800"/>
</dbReference>
<dbReference type="Gramene" id="Os02t0611800-01">
    <property type="protein sequence ID" value="Os02t0611800-01"/>
    <property type="gene ID" value="Os02g0611800"/>
</dbReference>
<dbReference type="KEGG" id="dosa:Os02g0611800"/>
<dbReference type="eggNOG" id="ENOG502QTJX">
    <property type="taxonomic scope" value="Eukaryota"/>
</dbReference>
<dbReference type="HOGENOM" id="CLU_014546_2_0_1"/>
<dbReference type="InParanoid" id="Q6K638"/>
<dbReference type="OMA" id="AIQHTRF"/>
<dbReference type="OrthoDB" id="671439at2759"/>
<dbReference type="Proteomes" id="UP000000763">
    <property type="component" value="Chromosome 2"/>
</dbReference>
<dbReference type="Proteomes" id="UP000059680">
    <property type="component" value="Chromosome 2"/>
</dbReference>
<dbReference type="GO" id="GO:0016747">
    <property type="term" value="F:acyltransferase activity, transferring groups other than amino-acyl groups"/>
    <property type="evidence" value="ECO:0000318"/>
    <property type="project" value="GO_Central"/>
</dbReference>
<dbReference type="GO" id="GO:0050734">
    <property type="term" value="F:hydroxycinnamoyltransferase activity"/>
    <property type="evidence" value="ECO:0007669"/>
    <property type="project" value="UniProtKB-ARBA"/>
</dbReference>
<dbReference type="FunFam" id="3.30.559.10:FF:000015">
    <property type="entry name" value="Spermidine hydroxycinnamoyl transferase"/>
    <property type="match status" value="1"/>
</dbReference>
<dbReference type="FunFam" id="3.30.559.10:FF:000008">
    <property type="entry name" value="Tryptamine hydroxycinnamoyl transferase"/>
    <property type="match status" value="1"/>
</dbReference>
<dbReference type="Gene3D" id="3.30.559.10">
    <property type="entry name" value="Chloramphenicol acetyltransferase-like domain"/>
    <property type="match status" value="2"/>
</dbReference>
<dbReference type="InterPro" id="IPR023213">
    <property type="entry name" value="CAT-like_dom_sf"/>
</dbReference>
<dbReference type="InterPro" id="IPR050317">
    <property type="entry name" value="Plant_Fungal_Acyltransferase"/>
</dbReference>
<dbReference type="PANTHER" id="PTHR31642:SF166">
    <property type="entry name" value="HYDROXYCINNAMOYLTRANSFERASE 2"/>
    <property type="match status" value="1"/>
</dbReference>
<dbReference type="PANTHER" id="PTHR31642">
    <property type="entry name" value="TRICHOTHECENE 3-O-ACETYLTRANSFERASE"/>
    <property type="match status" value="1"/>
</dbReference>
<dbReference type="Pfam" id="PF02458">
    <property type="entry name" value="Transferase"/>
    <property type="match status" value="1"/>
</dbReference>
<dbReference type="SUPFAM" id="SSF52777">
    <property type="entry name" value="CoA-dependent acyltransferases"/>
    <property type="match status" value="1"/>
</dbReference>
<proteinExistence type="evidence at transcript level"/>